<name>SYL_HAEDU</name>
<evidence type="ECO:0000255" key="1">
    <source>
        <dbReference type="HAMAP-Rule" id="MF_00049"/>
    </source>
</evidence>
<keyword id="KW-0030">Aminoacyl-tRNA synthetase</keyword>
<keyword id="KW-0067">ATP-binding</keyword>
<keyword id="KW-0963">Cytoplasm</keyword>
<keyword id="KW-0436">Ligase</keyword>
<keyword id="KW-0547">Nucleotide-binding</keyword>
<keyword id="KW-0648">Protein biosynthesis</keyword>
<keyword id="KW-1185">Reference proteome</keyword>
<feature type="chain" id="PRO_0000152022" description="Leucine--tRNA ligase">
    <location>
        <begin position="1"/>
        <end position="861"/>
    </location>
</feature>
<feature type="short sequence motif" description="'HIGH' region">
    <location>
        <begin position="42"/>
        <end position="52"/>
    </location>
</feature>
<feature type="short sequence motif" description="'KMSKS' region">
    <location>
        <begin position="619"/>
        <end position="623"/>
    </location>
</feature>
<feature type="binding site" evidence="1">
    <location>
        <position position="622"/>
    </location>
    <ligand>
        <name>ATP</name>
        <dbReference type="ChEBI" id="CHEBI:30616"/>
    </ligand>
</feature>
<gene>
    <name evidence="1" type="primary">leuS</name>
    <name type="ordered locus">HD_1132</name>
</gene>
<comment type="catalytic activity">
    <reaction evidence="1">
        <text>tRNA(Leu) + L-leucine + ATP = L-leucyl-tRNA(Leu) + AMP + diphosphate</text>
        <dbReference type="Rhea" id="RHEA:11688"/>
        <dbReference type="Rhea" id="RHEA-COMP:9613"/>
        <dbReference type="Rhea" id="RHEA-COMP:9622"/>
        <dbReference type="ChEBI" id="CHEBI:30616"/>
        <dbReference type="ChEBI" id="CHEBI:33019"/>
        <dbReference type="ChEBI" id="CHEBI:57427"/>
        <dbReference type="ChEBI" id="CHEBI:78442"/>
        <dbReference type="ChEBI" id="CHEBI:78494"/>
        <dbReference type="ChEBI" id="CHEBI:456215"/>
        <dbReference type="EC" id="6.1.1.4"/>
    </reaction>
</comment>
<comment type="subcellular location">
    <subcellularLocation>
        <location evidence="1">Cytoplasm</location>
    </subcellularLocation>
</comment>
<comment type="similarity">
    <text evidence="1">Belongs to the class-I aminoacyl-tRNA synthetase family.</text>
</comment>
<dbReference type="EC" id="6.1.1.4" evidence="1"/>
<dbReference type="EMBL" id="AE017143">
    <property type="protein sequence ID" value="AAP95994.1"/>
    <property type="molecule type" value="Genomic_DNA"/>
</dbReference>
<dbReference type="RefSeq" id="WP_010945043.1">
    <property type="nucleotide sequence ID" value="NC_002940.2"/>
</dbReference>
<dbReference type="SMR" id="Q7VM66"/>
<dbReference type="STRING" id="233412.HD_1132"/>
<dbReference type="KEGG" id="hdu:HD_1132"/>
<dbReference type="eggNOG" id="COG0495">
    <property type="taxonomic scope" value="Bacteria"/>
</dbReference>
<dbReference type="HOGENOM" id="CLU_004427_0_0_6"/>
<dbReference type="OrthoDB" id="9810365at2"/>
<dbReference type="Proteomes" id="UP000001022">
    <property type="component" value="Chromosome"/>
</dbReference>
<dbReference type="GO" id="GO:0005829">
    <property type="term" value="C:cytosol"/>
    <property type="evidence" value="ECO:0007669"/>
    <property type="project" value="TreeGrafter"/>
</dbReference>
<dbReference type="GO" id="GO:0002161">
    <property type="term" value="F:aminoacyl-tRNA deacylase activity"/>
    <property type="evidence" value="ECO:0007669"/>
    <property type="project" value="InterPro"/>
</dbReference>
<dbReference type="GO" id="GO:0005524">
    <property type="term" value="F:ATP binding"/>
    <property type="evidence" value="ECO:0007669"/>
    <property type="project" value="UniProtKB-UniRule"/>
</dbReference>
<dbReference type="GO" id="GO:0004823">
    <property type="term" value="F:leucine-tRNA ligase activity"/>
    <property type="evidence" value="ECO:0007669"/>
    <property type="project" value="UniProtKB-UniRule"/>
</dbReference>
<dbReference type="GO" id="GO:0006429">
    <property type="term" value="P:leucyl-tRNA aminoacylation"/>
    <property type="evidence" value="ECO:0007669"/>
    <property type="project" value="UniProtKB-UniRule"/>
</dbReference>
<dbReference type="CDD" id="cd07958">
    <property type="entry name" value="Anticodon_Ia_Leu_BEm"/>
    <property type="match status" value="1"/>
</dbReference>
<dbReference type="CDD" id="cd00812">
    <property type="entry name" value="LeuRS_core"/>
    <property type="match status" value="1"/>
</dbReference>
<dbReference type="FunFam" id="1.10.730.10:FF:000003">
    <property type="entry name" value="Leucine--tRNA ligase"/>
    <property type="match status" value="1"/>
</dbReference>
<dbReference type="FunFam" id="2.20.28.290:FF:000001">
    <property type="entry name" value="Leucine--tRNA ligase"/>
    <property type="match status" value="1"/>
</dbReference>
<dbReference type="FunFam" id="3.10.20.590:FF:000001">
    <property type="entry name" value="Leucine--tRNA ligase"/>
    <property type="match status" value="1"/>
</dbReference>
<dbReference type="FunFam" id="3.40.50.620:FF:000003">
    <property type="entry name" value="Leucine--tRNA ligase"/>
    <property type="match status" value="1"/>
</dbReference>
<dbReference type="FunFam" id="3.40.50.620:FF:000051">
    <property type="entry name" value="Leucine--tRNA ligase"/>
    <property type="match status" value="1"/>
</dbReference>
<dbReference type="FunFam" id="3.90.740.10:FF:000012">
    <property type="entry name" value="Leucine--tRNA ligase"/>
    <property type="match status" value="1"/>
</dbReference>
<dbReference type="Gene3D" id="2.20.28.290">
    <property type="match status" value="1"/>
</dbReference>
<dbReference type="Gene3D" id="3.10.20.590">
    <property type="match status" value="1"/>
</dbReference>
<dbReference type="Gene3D" id="3.40.50.620">
    <property type="entry name" value="HUPs"/>
    <property type="match status" value="2"/>
</dbReference>
<dbReference type="Gene3D" id="1.10.730.10">
    <property type="entry name" value="Isoleucyl-tRNA Synthetase, Domain 1"/>
    <property type="match status" value="1"/>
</dbReference>
<dbReference type="Gene3D" id="3.90.740.10">
    <property type="entry name" value="Valyl/Leucyl/Isoleucyl-tRNA synthetase, editing domain"/>
    <property type="match status" value="1"/>
</dbReference>
<dbReference type="HAMAP" id="MF_00049_B">
    <property type="entry name" value="Leu_tRNA_synth_B"/>
    <property type="match status" value="1"/>
</dbReference>
<dbReference type="InterPro" id="IPR001412">
    <property type="entry name" value="aa-tRNA-synth_I_CS"/>
</dbReference>
<dbReference type="InterPro" id="IPR002300">
    <property type="entry name" value="aa-tRNA-synth_Ia"/>
</dbReference>
<dbReference type="InterPro" id="IPR002302">
    <property type="entry name" value="Leu-tRNA-ligase"/>
</dbReference>
<dbReference type="InterPro" id="IPR025709">
    <property type="entry name" value="Leu_tRNA-synth_edit"/>
</dbReference>
<dbReference type="InterPro" id="IPR013155">
    <property type="entry name" value="M/V/L/I-tRNA-synth_anticd-bd"/>
</dbReference>
<dbReference type="InterPro" id="IPR015413">
    <property type="entry name" value="Methionyl/Leucyl_tRNA_Synth"/>
</dbReference>
<dbReference type="InterPro" id="IPR014729">
    <property type="entry name" value="Rossmann-like_a/b/a_fold"/>
</dbReference>
<dbReference type="InterPro" id="IPR009080">
    <property type="entry name" value="tRNAsynth_Ia_anticodon-bd"/>
</dbReference>
<dbReference type="InterPro" id="IPR009008">
    <property type="entry name" value="Val/Leu/Ile-tRNA-synth_edit"/>
</dbReference>
<dbReference type="NCBIfam" id="TIGR00396">
    <property type="entry name" value="leuS_bact"/>
    <property type="match status" value="1"/>
</dbReference>
<dbReference type="PANTHER" id="PTHR43740:SF2">
    <property type="entry name" value="LEUCINE--TRNA LIGASE, MITOCHONDRIAL"/>
    <property type="match status" value="1"/>
</dbReference>
<dbReference type="PANTHER" id="PTHR43740">
    <property type="entry name" value="LEUCYL-TRNA SYNTHETASE"/>
    <property type="match status" value="1"/>
</dbReference>
<dbReference type="Pfam" id="PF08264">
    <property type="entry name" value="Anticodon_1"/>
    <property type="match status" value="1"/>
</dbReference>
<dbReference type="Pfam" id="PF00133">
    <property type="entry name" value="tRNA-synt_1"/>
    <property type="match status" value="2"/>
</dbReference>
<dbReference type="Pfam" id="PF13603">
    <property type="entry name" value="tRNA-synt_1_2"/>
    <property type="match status" value="1"/>
</dbReference>
<dbReference type="Pfam" id="PF09334">
    <property type="entry name" value="tRNA-synt_1g"/>
    <property type="match status" value="1"/>
</dbReference>
<dbReference type="PRINTS" id="PR00985">
    <property type="entry name" value="TRNASYNTHLEU"/>
</dbReference>
<dbReference type="SUPFAM" id="SSF47323">
    <property type="entry name" value="Anticodon-binding domain of a subclass of class I aminoacyl-tRNA synthetases"/>
    <property type="match status" value="1"/>
</dbReference>
<dbReference type="SUPFAM" id="SSF52374">
    <property type="entry name" value="Nucleotidylyl transferase"/>
    <property type="match status" value="1"/>
</dbReference>
<dbReference type="SUPFAM" id="SSF50677">
    <property type="entry name" value="ValRS/IleRS/LeuRS editing domain"/>
    <property type="match status" value="1"/>
</dbReference>
<dbReference type="PROSITE" id="PS00178">
    <property type="entry name" value="AA_TRNA_LIGASE_I"/>
    <property type="match status" value="1"/>
</dbReference>
<reference key="1">
    <citation type="submission" date="2003-06" db="EMBL/GenBank/DDBJ databases">
        <title>The complete genome sequence of Haemophilus ducreyi.</title>
        <authorList>
            <person name="Munson R.S. Jr."/>
            <person name="Ray W.C."/>
            <person name="Mahairas G."/>
            <person name="Sabo P."/>
            <person name="Mungur R."/>
            <person name="Johnson L."/>
            <person name="Nguyen D."/>
            <person name="Wang J."/>
            <person name="Forst C."/>
            <person name="Hood L."/>
        </authorList>
    </citation>
    <scope>NUCLEOTIDE SEQUENCE [LARGE SCALE GENOMIC DNA]</scope>
    <source>
        <strain>35000HP / ATCC 700724</strain>
    </source>
</reference>
<protein>
    <recommendedName>
        <fullName evidence="1">Leucine--tRNA ligase</fullName>
        <ecNumber evidence="1">6.1.1.4</ecNumber>
    </recommendedName>
    <alternativeName>
        <fullName evidence="1">Leucyl-tRNA synthetase</fullName>
        <shortName evidence="1">LeuRS</shortName>
    </alternativeName>
</protein>
<accession>Q7VM66</accession>
<organism>
    <name type="scientific">Haemophilus ducreyi (strain 35000HP / ATCC 700724)</name>
    <dbReference type="NCBI Taxonomy" id="233412"/>
    <lineage>
        <taxon>Bacteria</taxon>
        <taxon>Pseudomonadati</taxon>
        <taxon>Pseudomonadota</taxon>
        <taxon>Gammaproteobacteria</taxon>
        <taxon>Pasteurellales</taxon>
        <taxon>Pasteurellaceae</taxon>
        <taxon>Haemophilus</taxon>
    </lineage>
</organism>
<proteinExistence type="inferred from homology"/>
<sequence>MQQQYNPSAIESKVQHFWEENKVFKAVKDITKEKYYCLSMLPYPSGRLHMGHVRNYTIGDVISRYQRMIGKNVLQPMGWDAFGLPAEGAAVKNNTAPAKWTYENIEYMKNQLKVLGFSYDWDREITTCRPEYYKWEQWFFTELYKKGLVYKKTSTVNWCPNDETVLANEQVHEGCCWRCDTPVEQRDIPQWFIKITDYAEELLTQLDNLTQWPDQVKTMQRNWIGRSEGVEITFKIAGSNATLPVYTTRPDTFFGVSYLAVAAAHPLAELASTNNPALAEFIREAKNTKVAEAELATMEKKGMPTGLFAIHPLTGKEIPVWVANFVLMHYGTGAVMAVPAHDERDFDFAKKYGLQINQVIQPLDASTWDFSQAAFTEHGKLINSAEFDGLDFNHAFNAIADKLESLGVGKRQVNFRLRDWGVSRQRYWGAPIPMMTTEQGEVVTVPLKDLPVILPENVVMDGVQSPIKSDPEWAKTTYEGQPALKETDTFDTFMESSWYYARYTCPQYHQGMLDADEANYWLPVDQYIGGIEHATMHLLYFRFFHKLLRDAGILTSDEPATKLLCQGMVLADAFYYTSPTNERIWVSPTQVSLERDEKGRIINATDPAGHKLVHSGMTKMSKSKNNGIDPQEMVEKYGADTVRLFMMFASPAEMTLEWQESGVEGAKRFLGRVWNLVYEYVQQPATQALNALELNKAQKELRRDVHKTIAKVSDDIGRRQTFNTAIAAIMELMNKLNKAPLESDQDKAVMAEALSAVVRMLYPITPHICFELWQALGNQQTIDFAPWVVSDETAMIEDEKLVVVQVNGKVRGKITVPANASEDEVKITAKNDANVAKFLADMQIVKEIYIPFKMLNFVVKV</sequence>